<name>RPOA_STRA1</name>
<evidence type="ECO:0000255" key="1">
    <source>
        <dbReference type="HAMAP-Rule" id="MF_00059"/>
    </source>
</evidence>
<dbReference type="EC" id="2.7.7.6" evidence="1"/>
<dbReference type="EMBL" id="CP000114">
    <property type="protein sequence ID" value="ABA45207.1"/>
    <property type="molecule type" value="Genomic_DNA"/>
</dbReference>
<dbReference type="RefSeq" id="WP_000568980.1">
    <property type="nucleotide sequence ID" value="NC_007432.1"/>
</dbReference>
<dbReference type="SMR" id="Q3K3U4"/>
<dbReference type="KEGG" id="sak:SAK_0116"/>
<dbReference type="HOGENOM" id="CLU_053084_0_1_9"/>
<dbReference type="GO" id="GO:0005737">
    <property type="term" value="C:cytoplasm"/>
    <property type="evidence" value="ECO:0007669"/>
    <property type="project" value="UniProtKB-ARBA"/>
</dbReference>
<dbReference type="GO" id="GO:0000428">
    <property type="term" value="C:DNA-directed RNA polymerase complex"/>
    <property type="evidence" value="ECO:0007669"/>
    <property type="project" value="UniProtKB-KW"/>
</dbReference>
<dbReference type="GO" id="GO:0003677">
    <property type="term" value="F:DNA binding"/>
    <property type="evidence" value="ECO:0007669"/>
    <property type="project" value="UniProtKB-UniRule"/>
</dbReference>
<dbReference type="GO" id="GO:0003899">
    <property type="term" value="F:DNA-directed RNA polymerase activity"/>
    <property type="evidence" value="ECO:0007669"/>
    <property type="project" value="UniProtKB-UniRule"/>
</dbReference>
<dbReference type="GO" id="GO:0046983">
    <property type="term" value="F:protein dimerization activity"/>
    <property type="evidence" value="ECO:0007669"/>
    <property type="project" value="InterPro"/>
</dbReference>
<dbReference type="GO" id="GO:0006351">
    <property type="term" value="P:DNA-templated transcription"/>
    <property type="evidence" value="ECO:0007669"/>
    <property type="project" value="UniProtKB-UniRule"/>
</dbReference>
<dbReference type="CDD" id="cd06928">
    <property type="entry name" value="RNAP_alpha_NTD"/>
    <property type="match status" value="1"/>
</dbReference>
<dbReference type="FunFam" id="1.10.150.20:FF:000001">
    <property type="entry name" value="DNA-directed RNA polymerase subunit alpha"/>
    <property type="match status" value="1"/>
</dbReference>
<dbReference type="FunFam" id="2.170.120.12:FF:000001">
    <property type="entry name" value="DNA-directed RNA polymerase subunit alpha"/>
    <property type="match status" value="1"/>
</dbReference>
<dbReference type="Gene3D" id="1.10.150.20">
    <property type="entry name" value="5' to 3' exonuclease, C-terminal subdomain"/>
    <property type="match status" value="1"/>
</dbReference>
<dbReference type="Gene3D" id="2.170.120.12">
    <property type="entry name" value="DNA-directed RNA polymerase, insert domain"/>
    <property type="match status" value="1"/>
</dbReference>
<dbReference type="Gene3D" id="3.30.1360.10">
    <property type="entry name" value="RNA polymerase, RBP11-like subunit"/>
    <property type="match status" value="1"/>
</dbReference>
<dbReference type="HAMAP" id="MF_00059">
    <property type="entry name" value="RNApol_bact_RpoA"/>
    <property type="match status" value="1"/>
</dbReference>
<dbReference type="InterPro" id="IPR011262">
    <property type="entry name" value="DNA-dir_RNA_pol_insert"/>
</dbReference>
<dbReference type="InterPro" id="IPR011263">
    <property type="entry name" value="DNA-dir_RNA_pol_RpoA/D/Rpb3"/>
</dbReference>
<dbReference type="InterPro" id="IPR011773">
    <property type="entry name" value="DNA-dir_RpoA"/>
</dbReference>
<dbReference type="InterPro" id="IPR036603">
    <property type="entry name" value="RBP11-like"/>
</dbReference>
<dbReference type="InterPro" id="IPR011260">
    <property type="entry name" value="RNAP_asu_C"/>
</dbReference>
<dbReference type="InterPro" id="IPR036643">
    <property type="entry name" value="RNApol_insert_sf"/>
</dbReference>
<dbReference type="NCBIfam" id="NF003513">
    <property type="entry name" value="PRK05182.1-2"/>
    <property type="match status" value="1"/>
</dbReference>
<dbReference type="NCBIfam" id="NF003515">
    <property type="entry name" value="PRK05182.2-1"/>
    <property type="match status" value="1"/>
</dbReference>
<dbReference type="NCBIfam" id="NF003518">
    <property type="entry name" value="PRK05182.2-4"/>
    <property type="match status" value="1"/>
</dbReference>
<dbReference type="NCBIfam" id="NF003519">
    <property type="entry name" value="PRK05182.2-5"/>
    <property type="match status" value="1"/>
</dbReference>
<dbReference type="NCBIfam" id="TIGR02027">
    <property type="entry name" value="rpoA"/>
    <property type="match status" value="1"/>
</dbReference>
<dbReference type="Pfam" id="PF01000">
    <property type="entry name" value="RNA_pol_A_bac"/>
    <property type="match status" value="1"/>
</dbReference>
<dbReference type="Pfam" id="PF03118">
    <property type="entry name" value="RNA_pol_A_CTD"/>
    <property type="match status" value="1"/>
</dbReference>
<dbReference type="Pfam" id="PF01193">
    <property type="entry name" value="RNA_pol_L"/>
    <property type="match status" value="1"/>
</dbReference>
<dbReference type="SMART" id="SM00662">
    <property type="entry name" value="RPOLD"/>
    <property type="match status" value="1"/>
</dbReference>
<dbReference type="SUPFAM" id="SSF47789">
    <property type="entry name" value="C-terminal domain of RNA polymerase alpha subunit"/>
    <property type="match status" value="1"/>
</dbReference>
<dbReference type="SUPFAM" id="SSF56553">
    <property type="entry name" value="Insert subdomain of RNA polymerase alpha subunit"/>
    <property type="match status" value="1"/>
</dbReference>
<dbReference type="SUPFAM" id="SSF55257">
    <property type="entry name" value="RBP11-like subunits of RNA polymerase"/>
    <property type="match status" value="1"/>
</dbReference>
<keyword id="KW-0240">DNA-directed RNA polymerase</keyword>
<keyword id="KW-0548">Nucleotidyltransferase</keyword>
<keyword id="KW-0804">Transcription</keyword>
<keyword id="KW-0808">Transferase</keyword>
<feature type="chain" id="PRO_0000225305" description="DNA-directed RNA polymerase subunit alpha">
    <location>
        <begin position="1"/>
        <end position="312"/>
    </location>
</feature>
<feature type="region of interest" description="Alpha N-terminal domain (alpha-NTD)" evidence="1">
    <location>
        <begin position="1"/>
        <end position="226"/>
    </location>
</feature>
<feature type="region of interest" description="Alpha C-terminal domain (alpha-CTD)" evidence="1">
    <location>
        <begin position="242"/>
        <end position="312"/>
    </location>
</feature>
<accession>Q3K3U4</accession>
<sequence>MIEFEKPIITKIDENKDYGRFVIEPLERGYGTTLGNSLRRVLLSSLPGAAVTSIKIDGVLHEFDTIPGVREDVMQIILNVKGLAVKSYVEDEKIIELDVEGPAEITAGDILTDSDIEIVNPDHYLFTIAEGHSLKATMTVAKNRGYVPAEGNKKDDVPVGTLAVDSIYTPVKKVNYQVEPARVGSNDGFDKLTIEIMTNGTIIPEDALGLSARVLIEHLNLFTDLTEVAKATEVMKETEKVNDEKVLDRTIEELDLSVRSYNCLKRAGINTVFDLTEKTEPEMMKVRNLGRKSLEEVKIKLADLGLGLKNDK</sequence>
<proteinExistence type="inferred from homology"/>
<reference key="1">
    <citation type="journal article" date="2005" name="Proc. Natl. Acad. Sci. U.S.A.">
        <title>Genome analysis of multiple pathogenic isolates of Streptococcus agalactiae: implications for the microbial 'pan-genome'.</title>
        <authorList>
            <person name="Tettelin H."/>
            <person name="Masignani V."/>
            <person name="Cieslewicz M.J."/>
            <person name="Donati C."/>
            <person name="Medini D."/>
            <person name="Ward N.L."/>
            <person name="Angiuoli S.V."/>
            <person name="Crabtree J."/>
            <person name="Jones A.L."/>
            <person name="Durkin A.S."/>
            <person name="DeBoy R.T."/>
            <person name="Davidsen T.M."/>
            <person name="Mora M."/>
            <person name="Scarselli M."/>
            <person name="Margarit y Ros I."/>
            <person name="Peterson J.D."/>
            <person name="Hauser C.R."/>
            <person name="Sundaram J.P."/>
            <person name="Nelson W.C."/>
            <person name="Madupu R."/>
            <person name="Brinkac L.M."/>
            <person name="Dodson R.J."/>
            <person name="Rosovitz M.J."/>
            <person name="Sullivan S.A."/>
            <person name="Daugherty S.C."/>
            <person name="Haft D.H."/>
            <person name="Selengut J."/>
            <person name="Gwinn M.L."/>
            <person name="Zhou L."/>
            <person name="Zafar N."/>
            <person name="Khouri H."/>
            <person name="Radune D."/>
            <person name="Dimitrov G."/>
            <person name="Watkins K."/>
            <person name="O'Connor K.J."/>
            <person name="Smith S."/>
            <person name="Utterback T.R."/>
            <person name="White O."/>
            <person name="Rubens C.E."/>
            <person name="Grandi G."/>
            <person name="Madoff L.C."/>
            <person name="Kasper D.L."/>
            <person name="Telford J.L."/>
            <person name="Wessels M.R."/>
            <person name="Rappuoli R."/>
            <person name="Fraser C.M."/>
        </authorList>
    </citation>
    <scope>NUCLEOTIDE SEQUENCE [LARGE SCALE GENOMIC DNA]</scope>
    <source>
        <strain>ATCC 27591 / A909 / CDC SS700</strain>
    </source>
</reference>
<protein>
    <recommendedName>
        <fullName evidence="1">DNA-directed RNA polymerase subunit alpha</fullName>
        <shortName evidence="1">RNAP subunit alpha</shortName>
        <ecNumber evidence="1">2.7.7.6</ecNumber>
    </recommendedName>
    <alternativeName>
        <fullName evidence="1">RNA polymerase subunit alpha</fullName>
    </alternativeName>
    <alternativeName>
        <fullName evidence="1">Transcriptase subunit alpha</fullName>
    </alternativeName>
</protein>
<comment type="function">
    <text evidence="1">DNA-dependent RNA polymerase catalyzes the transcription of DNA into RNA using the four ribonucleoside triphosphates as substrates.</text>
</comment>
<comment type="catalytic activity">
    <reaction evidence="1">
        <text>RNA(n) + a ribonucleoside 5'-triphosphate = RNA(n+1) + diphosphate</text>
        <dbReference type="Rhea" id="RHEA:21248"/>
        <dbReference type="Rhea" id="RHEA-COMP:14527"/>
        <dbReference type="Rhea" id="RHEA-COMP:17342"/>
        <dbReference type="ChEBI" id="CHEBI:33019"/>
        <dbReference type="ChEBI" id="CHEBI:61557"/>
        <dbReference type="ChEBI" id="CHEBI:140395"/>
        <dbReference type="EC" id="2.7.7.6"/>
    </reaction>
</comment>
<comment type="subunit">
    <text evidence="1">Homodimer. The RNAP catalytic core consists of 2 alpha, 1 beta, 1 beta' and 1 omega subunit. When a sigma factor is associated with the core the holoenzyme is formed, which can initiate transcription.</text>
</comment>
<comment type="domain">
    <text evidence="1">The N-terminal domain is essential for RNAP assembly and basal transcription, whereas the C-terminal domain is involved in interaction with transcriptional regulators and with upstream promoter elements.</text>
</comment>
<comment type="similarity">
    <text evidence="1">Belongs to the RNA polymerase alpha chain family.</text>
</comment>
<gene>
    <name evidence="1" type="primary">rpoA</name>
    <name type="ordered locus">SAK_0116</name>
</gene>
<organism>
    <name type="scientific">Streptococcus agalactiae serotype Ia (strain ATCC 27591 / A909 / CDC SS700)</name>
    <dbReference type="NCBI Taxonomy" id="205921"/>
    <lineage>
        <taxon>Bacteria</taxon>
        <taxon>Bacillati</taxon>
        <taxon>Bacillota</taxon>
        <taxon>Bacilli</taxon>
        <taxon>Lactobacillales</taxon>
        <taxon>Streptococcaceae</taxon>
        <taxon>Streptococcus</taxon>
    </lineage>
</organism>